<evidence type="ECO:0000255" key="1">
    <source>
        <dbReference type="HAMAP-Rule" id="MF_01588"/>
    </source>
</evidence>
<reference key="1">
    <citation type="journal article" date="2006" name="PLoS Genet.">
        <title>Who ate whom? Adaptive Helicobacter genomic changes that accompanied a host jump from early humans to large felines.</title>
        <authorList>
            <person name="Eppinger M."/>
            <person name="Baar C."/>
            <person name="Linz B."/>
            <person name="Raddatz G."/>
            <person name="Lanz C."/>
            <person name="Keller H."/>
            <person name="Morelli G."/>
            <person name="Gressmann H."/>
            <person name="Achtman M."/>
            <person name="Schuster S.C."/>
        </authorList>
    </citation>
    <scope>NUCLEOTIDE SEQUENCE [LARGE SCALE GENOMIC DNA]</scope>
    <source>
        <strain>Sheeba</strain>
    </source>
</reference>
<feature type="chain" id="PRO_0000313262" description="DNA ligase">
    <location>
        <begin position="1"/>
        <end position="654"/>
    </location>
</feature>
<feature type="domain" description="BRCT" evidence="1">
    <location>
        <begin position="577"/>
        <end position="654"/>
    </location>
</feature>
<feature type="active site" description="N6-AMP-lysine intermediate" evidence="1">
    <location>
        <position position="112"/>
    </location>
</feature>
<feature type="binding site" evidence="1">
    <location>
        <begin position="32"/>
        <end position="36"/>
    </location>
    <ligand>
        <name>NAD(+)</name>
        <dbReference type="ChEBI" id="CHEBI:57540"/>
    </ligand>
</feature>
<feature type="binding site" evidence="1">
    <location>
        <begin position="81"/>
        <end position="82"/>
    </location>
    <ligand>
        <name>NAD(+)</name>
        <dbReference type="ChEBI" id="CHEBI:57540"/>
    </ligand>
</feature>
<feature type="binding site" evidence="1">
    <location>
        <position position="133"/>
    </location>
    <ligand>
        <name>NAD(+)</name>
        <dbReference type="ChEBI" id="CHEBI:57540"/>
    </ligand>
</feature>
<feature type="binding site" evidence="1">
    <location>
        <position position="167"/>
    </location>
    <ligand>
        <name>NAD(+)</name>
        <dbReference type="ChEBI" id="CHEBI:57540"/>
    </ligand>
</feature>
<feature type="binding site" evidence="1">
    <location>
        <position position="306"/>
    </location>
    <ligand>
        <name>NAD(+)</name>
        <dbReference type="ChEBI" id="CHEBI:57540"/>
    </ligand>
</feature>
<feature type="binding site" evidence="1">
    <location>
        <position position="400"/>
    </location>
    <ligand>
        <name>Zn(2+)</name>
        <dbReference type="ChEBI" id="CHEBI:29105"/>
    </ligand>
</feature>
<feature type="binding site" evidence="1">
    <location>
        <position position="403"/>
    </location>
    <ligand>
        <name>Zn(2+)</name>
        <dbReference type="ChEBI" id="CHEBI:29105"/>
    </ligand>
</feature>
<feature type="binding site" evidence="1">
    <location>
        <position position="416"/>
    </location>
    <ligand>
        <name>Zn(2+)</name>
        <dbReference type="ChEBI" id="CHEBI:29105"/>
    </ligand>
</feature>
<feature type="binding site" evidence="1">
    <location>
        <position position="421"/>
    </location>
    <ligand>
        <name>Zn(2+)</name>
        <dbReference type="ChEBI" id="CHEBI:29105"/>
    </ligand>
</feature>
<sequence>MIKSQKEYLERIEYLNTLSHHYYNLDEPIVSDAVYDELYQELKAYEEKNPSQIQANSPTQKVGATALNQFNKNPHLTRMWSLDDVFNHNELQAWLQRILKAYPSASFVCSPKLDGVSLNLLYQKGKLMKATTRGNGLEGELVTTNAKHVANISHTIPYNEEIEIRGEVIISKEDFNALNEERLNANEPLFANPRNAASGSLRQLDSKITKKRKLQFIPWGVGKHSLNFLSFKECLDFIVSLGFSAIKHLSLNKNHQEIEANYHTLIQERERFFALLDGMVIVVNELNIQKELGYTQKSPKFACAYKFPALEKHTKIVGVINQVGRSGAITPVALLEPVEIAGAIITKATLHNYSEIEKKNIMLNDRVVVIRSGDVIPKIIKPLESYRDGSQCKIIRPKVCPICSHELLCEEIFTYCQNLNCSARLKESLIHFASKDALNIQGLGDKVIEQLFEEKLIFNALDLYALKLEDLMRLDKFKIKKAQNLLDAIQKSKNPPLWRLINALGIEHIGKGASKTLAKYGLYVLEKSEDEFLEMEGFGVEMARSLVNFYASNQEFIQSLFDLLNPKNSDIIEEKQESSSIFSHKTIVLTGTLSKPRQEYAQILENLGAKISSSVSAKTDFLIVGENAGSKLSLAQKHGVNILNEEELLKYLKE</sequence>
<proteinExistence type="inferred from homology"/>
<comment type="function">
    <text evidence="1">DNA ligase that catalyzes the formation of phosphodiester linkages between 5'-phosphoryl and 3'-hydroxyl groups in double-stranded DNA using NAD as a coenzyme and as the energy source for the reaction. It is essential for DNA replication and repair of damaged DNA.</text>
</comment>
<comment type="catalytic activity">
    <reaction evidence="1">
        <text>NAD(+) + (deoxyribonucleotide)n-3'-hydroxyl + 5'-phospho-(deoxyribonucleotide)m = (deoxyribonucleotide)n+m + AMP + beta-nicotinamide D-nucleotide.</text>
        <dbReference type="EC" id="6.5.1.2"/>
    </reaction>
</comment>
<comment type="cofactor">
    <cofactor evidence="1">
        <name>Mg(2+)</name>
        <dbReference type="ChEBI" id="CHEBI:18420"/>
    </cofactor>
    <cofactor evidence="1">
        <name>Mn(2+)</name>
        <dbReference type="ChEBI" id="CHEBI:29035"/>
    </cofactor>
</comment>
<comment type="similarity">
    <text evidence="1">Belongs to the NAD-dependent DNA ligase family. LigA subfamily.</text>
</comment>
<protein>
    <recommendedName>
        <fullName evidence="1">DNA ligase</fullName>
        <ecNumber evidence="1">6.5.1.2</ecNumber>
    </recommendedName>
    <alternativeName>
        <fullName evidence="1">Polydeoxyribonucleotide synthase [NAD(+)]</fullName>
    </alternativeName>
</protein>
<gene>
    <name evidence="1" type="primary">ligA</name>
    <name type="ordered locus">Hac_0831</name>
</gene>
<dbReference type="EC" id="6.5.1.2" evidence="1"/>
<dbReference type="EMBL" id="AM260522">
    <property type="protein sequence ID" value="CAJ99615.1"/>
    <property type="molecule type" value="Genomic_DNA"/>
</dbReference>
<dbReference type="RefSeq" id="WP_011577728.1">
    <property type="nucleotide sequence ID" value="NC_008229.1"/>
</dbReference>
<dbReference type="SMR" id="Q17XL1"/>
<dbReference type="STRING" id="382638.Hac_0831"/>
<dbReference type="GeneID" id="31758246"/>
<dbReference type="KEGG" id="hac:Hac_0831"/>
<dbReference type="eggNOG" id="COG0272">
    <property type="taxonomic scope" value="Bacteria"/>
</dbReference>
<dbReference type="HOGENOM" id="CLU_007764_2_1_7"/>
<dbReference type="OrthoDB" id="9759736at2"/>
<dbReference type="BioCyc" id="HACI382638:HAC_RS03575-MONOMER"/>
<dbReference type="Proteomes" id="UP000000775">
    <property type="component" value="Chromosome"/>
</dbReference>
<dbReference type="GO" id="GO:0005829">
    <property type="term" value="C:cytosol"/>
    <property type="evidence" value="ECO:0007669"/>
    <property type="project" value="TreeGrafter"/>
</dbReference>
<dbReference type="GO" id="GO:0003677">
    <property type="term" value="F:DNA binding"/>
    <property type="evidence" value="ECO:0007669"/>
    <property type="project" value="InterPro"/>
</dbReference>
<dbReference type="GO" id="GO:0003911">
    <property type="term" value="F:DNA ligase (NAD+) activity"/>
    <property type="evidence" value="ECO:0007669"/>
    <property type="project" value="UniProtKB-UniRule"/>
</dbReference>
<dbReference type="GO" id="GO:0046872">
    <property type="term" value="F:metal ion binding"/>
    <property type="evidence" value="ECO:0007669"/>
    <property type="project" value="UniProtKB-KW"/>
</dbReference>
<dbReference type="GO" id="GO:0006281">
    <property type="term" value="P:DNA repair"/>
    <property type="evidence" value="ECO:0007669"/>
    <property type="project" value="UniProtKB-KW"/>
</dbReference>
<dbReference type="GO" id="GO:0006260">
    <property type="term" value="P:DNA replication"/>
    <property type="evidence" value="ECO:0007669"/>
    <property type="project" value="UniProtKB-KW"/>
</dbReference>
<dbReference type="CDD" id="cd17748">
    <property type="entry name" value="BRCT_DNA_ligase_like"/>
    <property type="match status" value="1"/>
</dbReference>
<dbReference type="CDD" id="cd00114">
    <property type="entry name" value="LIGANc"/>
    <property type="match status" value="1"/>
</dbReference>
<dbReference type="FunFam" id="1.10.150.20:FF:000007">
    <property type="entry name" value="DNA ligase"/>
    <property type="match status" value="1"/>
</dbReference>
<dbReference type="FunFam" id="2.40.50.140:FF:000012">
    <property type="entry name" value="DNA ligase"/>
    <property type="match status" value="1"/>
</dbReference>
<dbReference type="Gene3D" id="1.10.150.20">
    <property type="entry name" value="5' to 3' exonuclease, C-terminal subdomain"/>
    <property type="match status" value="2"/>
</dbReference>
<dbReference type="Gene3D" id="3.40.50.10190">
    <property type="entry name" value="BRCT domain"/>
    <property type="match status" value="1"/>
</dbReference>
<dbReference type="Gene3D" id="3.30.470.30">
    <property type="entry name" value="DNA ligase/mRNA capping enzyme"/>
    <property type="match status" value="1"/>
</dbReference>
<dbReference type="Gene3D" id="1.10.287.610">
    <property type="entry name" value="Helix hairpin bin"/>
    <property type="match status" value="1"/>
</dbReference>
<dbReference type="Gene3D" id="2.40.50.140">
    <property type="entry name" value="Nucleic acid-binding proteins"/>
    <property type="match status" value="1"/>
</dbReference>
<dbReference type="HAMAP" id="MF_01588">
    <property type="entry name" value="DNA_ligase_A"/>
    <property type="match status" value="1"/>
</dbReference>
<dbReference type="InterPro" id="IPR001357">
    <property type="entry name" value="BRCT_dom"/>
</dbReference>
<dbReference type="InterPro" id="IPR036420">
    <property type="entry name" value="BRCT_dom_sf"/>
</dbReference>
<dbReference type="InterPro" id="IPR001679">
    <property type="entry name" value="DNA_ligase"/>
</dbReference>
<dbReference type="InterPro" id="IPR018239">
    <property type="entry name" value="DNA_ligase_AS"/>
</dbReference>
<dbReference type="InterPro" id="IPR033136">
    <property type="entry name" value="DNA_ligase_CS"/>
</dbReference>
<dbReference type="InterPro" id="IPR013839">
    <property type="entry name" value="DNAligase_adenylation"/>
</dbReference>
<dbReference type="InterPro" id="IPR013840">
    <property type="entry name" value="DNAligase_N"/>
</dbReference>
<dbReference type="InterPro" id="IPR003583">
    <property type="entry name" value="Hlx-hairpin-Hlx_DNA-bd_motif"/>
</dbReference>
<dbReference type="InterPro" id="IPR012340">
    <property type="entry name" value="NA-bd_OB-fold"/>
</dbReference>
<dbReference type="InterPro" id="IPR004150">
    <property type="entry name" value="NAD_DNA_ligase_OB"/>
</dbReference>
<dbReference type="InterPro" id="IPR010994">
    <property type="entry name" value="RuvA_2-like"/>
</dbReference>
<dbReference type="NCBIfam" id="TIGR00575">
    <property type="entry name" value="dnlj"/>
    <property type="match status" value="1"/>
</dbReference>
<dbReference type="NCBIfam" id="NF005932">
    <property type="entry name" value="PRK07956.1"/>
    <property type="match status" value="1"/>
</dbReference>
<dbReference type="PANTHER" id="PTHR23389">
    <property type="entry name" value="CHROMOSOME TRANSMISSION FIDELITY FACTOR 18"/>
    <property type="match status" value="1"/>
</dbReference>
<dbReference type="PANTHER" id="PTHR23389:SF9">
    <property type="entry name" value="DNA LIGASE"/>
    <property type="match status" value="1"/>
</dbReference>
<dbReference type="Pfam" id="PF00533">
    <property type="entry name" value="BRCT"/>
    <property type="match status" value="1"/>
</dbReference>
<dbReference type="Pfam" id="PF01653">
    <property type="entry name" value="DNA_ligase_aden"/>
    <property type="match status" value="1"/>
</dbReference>
<dbReference type="Pfam" id="PF03120">
    <property type="entry name" value="DNA_ligase_OB"/>
    <property type="match status" value="1"/>
</dbReference>
<dbReference type="PIRSF" id="PIRSF001604">
    <property type="entry name" value="LigA"/>
    <property type="match status" value="1"/>
</dbReference>
<dbReference type="SMART" id="SM00292">
    <property type="entry name" value="BRCT"/>
    <property type="match status" value="1"/>
</dbReference>
<dbReference type="SMART" id="SM00278">
    <property type="entry name" value="HhH1"/>
    <property type="match status" value="3"/>
</dbReference>
<dbReference type="SMART" id="SM00532">
    <property type="entry name" value="LIGANc"/>
    <property type="match status" value="1"/>
</dbReference>
<dbReference type="SUPFAM" id="SSF52113">
    <property type="entry name" value="BRCT domain"/>
    <property type="match status" value="1"/>
</dbReference>
<dbReference type="SUPFAM" id="SSF56091">
    <property type="entry name" value="DNA ligase/mRNA capping enzyme, catalytic domain"/>
    <property type="match status" value="1"/>
</dbReference>
<dbReference type="SUPFAM" id="SSF50249">
    <property type="entry name" value="Nucleic acid-binding proteins"/>
    <property type="match status" value="1"/>
</dbReference>
<dbReference type="SUPFAM" id="SSF47781">
    <property type="entry name" value="RuvA domain 2-like"/>
    <property type="match status" value="1"/>
</dbReference>
<dbReference type="PROSITE" id="PS50172">
    <property type="entry name" value="BRCT"/>
    <property type="match status" value="1"/>
</dbReference>
<dbReference type="PROSITE" id="PS01055">
    <property type="entry name" value="DNA_LIGASE_N1"/>
    <property type="match status" value="1"/>
</dbReference>
<dbReference type="PROSITE" id="PS01056">
    <property type="entry name" value="DNA_LIGASE_N2"/>
    <property type="match status" value="1"/>
</dbReference>
<organism>
    <name type="scientific">Helicobacter acinonychis (strain Sheeba)</name>
    <dbReference type="NCBI Taxonomy" id="382638"/>
    <lineage>
        <taxon>Bacteria</taxon>
        <taxon>Pseudomonadati</taxon>
        <taxon>Campylobacterota</taxon>
        <taxon>Epsilonproteobacteria</taxon>
        <taxon>Campylobacterales</taxon>
        <taxon>Helicobacteraceae</taxon>
        <taxon>Helicobacter</taxon>
    </lineage>
</organism>
<keyword id="KW-0227">DNA damage</keyword>
<keyword id="KW-0234">DNA repair</keyword>
<keyword id="KW-0235">DNA replication</keyword>
<keyword id="KW-0436">Ligase</keyword>
<keyword id="KW-0460">Magnesium</keyword>
<keyword id="KW-0464">Manganese</keyword>
<keyword id="KW-0479">Metal-binding</keyword>
<keyword id="KW-0520">NAD</keyword>
<keyword id="KW-0862">Zinc</keyword>
<accession>Q17XL1</accession>
<name>DNLJ_HELAH</name>